<keyword id="KW-0002">3D-structure</keyword>
<keyword id="KW-0010">Activator</keyword>
<keyword id="KW-0238">DNA-binding</keyword>
<keyword id="KW-1185">Reference proteome</keyword>
<keyword id="KW-0678">Repressor</keyword>
<keyword id="KW-0346">Stress response</keyword>
<keyword id="KW-0804">Transcription</keyword>
<keyword id="KW-0805">Transcription regulation</keyword>
<evidence type="ECO:0000269" key="1">
    <source>
    </source>
</evidence>
<evidence type="ECO:0000269" key="2">
    <source>
    </source>
</evidence>
<evidence type="ECO:0000269" key="3">
    <source>
    </source>
</evidence>
<evidence type="ECO:0000269" key="4">
    <source>
    </source>
</evidence>
<evidence type="ECO:0000269" key="5">
    <source>
    </source>
</evidence>
<evidence type="ECO:0000269" key="6">
    <source>
    </source>
</evidence>
<evidence type="ECO:0000269" key="7">
    <source>
    </source>
</evidence>
<evidence type="ECO:0000269" key="8">
    <source>
    </source>
</evidence>
<evidence type="ECO:0000303" key="9">
    <source>
    </source>
</evidence>
<evidence type="ECO:0000305" key="10"/>
<evidence type="ECO:0000305" key="11">
    <source>
    </source>
</evidence>
<evidence type="ECO:0007829" key="12">
    <source>
        <dbReference type="PDB" id="2DHM"/>
    </source>
</evidence>
<comment type="function">
    <text evidence="1 2 3 4 5 6 8">Transcriptional regulator that plays an important role in general stress response. Has many effects on cell morphology, cell growth and cell division. Acts by regulating the transcription of many genes, including dacA (PBP-5), dacC (PBP-6), ampC and mreB. Probably involved in the coordination of genes that adapt the cell physiology in order to enhance cell adaptation and survival under stress conditions. Essential for normal cell morphology in stationary phase and under conditions of starvation (PubMed:10361282, PubMed:12354237, PubMed:19111750, PubMed:21464593, PubMed:25691594). Also regulates a complex network of genes encoding proteins related to biofilm development, and negatively modulates flagellar biosynthesis and swimming capacity. Could be a motile/adhesive transcriptional switch, specifically involved in the transition between the planktonic and the attachment stage of biofilm formation (PubMed:25691594). Overexpression produces round cell shape, impairs cell growth rate and induces biofilm development (PubMed:15345459, PubMed:21464593, PubMed:305364).</text>
</comment>
<comment type="interaction">
    <interactant intactId="EBI-545774">
        <id>P0ABE2</id>
    </interactant>
    <interactant intactId="EBI-545828">
        <id>P0AC69</id>
        <label>grxD</label>
    </interactant>
    <organismsDiffer>false</organismsDiffer>
    <experiments>5</experiments>
</comment>
<comment type="interaction">
    <interactant intactId="EBI-545774">
        <id>P0ABE2</id>
    </interactant>
    <interactant intactId="EBI-545876">
        <id>P33361</id>
        <label>yehY</label>
    </interactant>
    <organismsDiffer>false</organismsDiffer>
    <experiments>3</experiments>
</comment>
<comment type="induction">
    <text evidence="1 7">Induced during the transition to the stationary phase, under the control of the sigma factor RpoS (PubMed:2684651). Also induced during early logarithmic growth in response to several forms of stress (heat shock, acidic stress, oxidative stress, carbon-starvation stress and osmotic shock), and this induction can be partially RpoS independent (PubMed:10361282).</text>
</comment>
<comment type="miscellaneous">
    <text evidence="11">Was predicted, by combining genome sequences, physical interactions and 3D structures analyses, to be a reductase that interacts with a glutaredoxin.</text>
</comment>
<comment type="similarity">
    <text evidence="10">Belongs to the BolA/IbaG family.</text>
</comment>
<comment type="sequence caution" evidence="10">
    <conflict type="erroneous initiation">
        <sequence resource="EMBL-CDS" id="AAB28882"/>
    </conflict>
    <text>Extended N-terminus.</text>
</comment>
<comment type="sequence caution" evidence="10">
    <conflict type="erroneous initiation">
        <sequence resource="EMBL-CDS" id="AAB40191"/>
    </conflict>
    <text>Extended N-terminus.</text>
</comment>
<comment type="sequence caution" evidence="10">
    <conflict type="erroneous initiation">
        <sequence resource="EMBL-CDS" id="CAA35633"/>
    </conflict>
    <text>Extended N-terminus.</text>
</comment>
<accession>P0ABE2</accession>
<accession>P15298</accession>
<accession>Q2MBZ1</accession>
<sequence length="105" mass="11994">MMIRERIEEKLRAAFQPVFLEVVDESYRHNVPAGSESHFKVVLVSDRFTGERFLNRHRMIYSTLAEELSTTVHALALHTYTIKEWEGLQDTVFASPPCRGAGSIA</sequence>
<name>BOLA_ECOLI</name>
<reference key="1">
    <citation type="journal article" date="1989" name="EMBO J.">
        <title>Induction of a growth-phase-dependent promoter triggers transcription of bolA, an Escherichia coli morphogene.</title>
        <authorList>
            <person name="Aldea M."/>
            <person name="Garrido T."/>
            <person name="Hernandez-Chico C."/>
            <person name="Vicente M."/>
            <person name="Kushner S.R."/>
        </authorList>
    </citation>
    <scope>NUCLEOTIDE SEQUENCE [GENOMIC DNA]</scope>
    <scope>INDUCTION</scope>
</reference>
<reference key="2">
    <citation type="submission" date="1997-01" db="EMBL/GenBank/DDBJ databases">
        <title>Sequence of minutes 4-25 of Escherichia coli.</title>
        <authorList>
            <person name="Chung E."/>
            <person name="Allen E."/>
            <person name="Araujo R."/>
            <person name="Aparicio A.M."/>
            <person name="Davis K."/>
            <person name="Duncan M."/>
            <person name="Federspiel N."/>
            <person name="Hyman R."/>
            <person name="Kalman S."/>
            <person name="Komp C."/>
            <person name="Kurdi O."/>
            <person name="Lew H."/>
            <person name="Lin D."/>
            <person name="Namath A."/>
            <person name="Oefner P."/>
            <person name="Roberts D."/>
            <person name="Schramm S."/>
            <person name="Davis R.W."/>
        </authorList>
    </citation>
    <scope>NUCLEOTIDE SEQUENCE [LARGE SCALE GENOMIC DNA]</scope>
    <source>
        <strain>K12 / MG1655 / ATCC 47076</strain>
    </source>
</reference>
<reference key="3">
    <citation type="journal article" date="1997" name="Science">
        <title>The complete genome sequence of Escherichia coli K-12.</title>
        <authorList>
            <person name="Blattner F.R."/>
            <person name="Plunkett G. III"/>
            <person name="Bloch C.A."/>
            <person name="Perna N.T."/>
            <person name="Burland V."/>
            <person name="Riley M."/>
            <person name="Collado-Vides J."/>
            <person name="Glasner J.D."/>
            <person name="Rode C.K."/>
            <person name="Mayhew G.F."/>
            <person name="Gregor J."/>
            <person name="Davis N.W."/>
            <person name="Kirkpatrick H.A."/>
            <person name="Goeden M.A."/>
            <person name="Rose D.J."/>
            <person name="Mau B."/>
            <person name="Shao Y."/>
        </authorList>
    </citation>
    <scope>NUCLEOTIDE SEQUENCE [LARGE SCALE GENOMIC DNA]</scope>
    <source>
        <strain>K12 / MG1655 / ATCC 47076</strain>
    </source>
</reference>
<reference key="4">
    <citation type="journal article" date="2006" name="Mol. Syst. Biol.">
        <title>Highly accurate genome sequences of Escherichia coli K-12 strains MG1655 and W3110.</title>
        <authorList>
            <person name="Hayashi K."/>
            <person name="Morooka N."/>
            <person name="Yamamoto Y."/>
            <person name="Fujita K."/>
            <person name="Isono K."/>
            <person name="Choi S."/>
            <person name="Ohtsubo E."/>
            <person name="Baba T."/>
            <person name="Wanner B.L."/>
            <person name="Mori H."/>
            <person name="Horiuchi T."/>
        </authorList>
    </citation>
    <scope>NUCLEOTIDE SEQUENCE [LARGE SCALE GENOMIC DNA]</scope>
    <source>
        <strain>K12 / W3110 / ATCC 27325 / DSM 5911</strain>
    </source>
</reference>
<reference key="5">
    <citation type="journal article" date="1993" name="Mol. Microbiol.">
        <title>AmpG, a signal transducer in chromosomal beta-lactamase induction.</title>
        <authorList>
            <person name="Lindquist S."/>
            <person name="Weston-Hafer K."/>
            <person name="Schmidt H."/>
            <person name="Pul C."/>
            <person name="Korfmann G."/>
            <person name="Erickson J."/>
            <person name="Sanders C."/>
            <person name="Martin H.H."/>
            <person name="Normark S."/>
        </authorList>
    </citation>
    <scope>NUCLEOTIDE SEQUENCE [GENOMIC DNA] OF 1-14</scope>
</reference>
<reference key="6">
    <citation type="journal article" date="1988" name="J. Bacteriol.">
        <title>Identification, cloning, and expression of bolA, an ftsZ-dependent morphogene of Escherichia coli.</title>
        <authorList>
            <person name="Aldea M."/>
            <person name="Hernandez-Chico C."/>
            <person name="de la Campa A.G."/>
            <person name="Kushner S.R."/>
            <person name="Vicente M."/>
        </authorList>
    </citation>
    <scope>FUNCTION IN MORPHOGENETIC PATHWAY</scope>
</reference>
<reference key="7">
    <citation type="journal article" date="1999" name="Mol. Microbiol.">
        <title>The stationary-phase morphogene bolA from Escherichia coli is induced by stress during early stages of growth.</title>
        <authorList>
            <person name="Santos J.M."/>
            <person name="Freire P."/>
            <person name="Vicente M."/>
            <person name="Arraiano C.M."/>
        </authorList>
    </citation>
    <scope>FUNCTION</scope>
    <scope>INDUCTION</scope>
</reference>
<reference key="8">
    <citation type="journal article" date="2002" name="Mol. Microbiol.">
        <title>The gene bolA regulates dacA (PBP5), dacC (PBP6) and ampC (AmpC), promoting normal morphology in Escherichia coli.</title>
        <authorList>
            <person name="Santos J.M."/>
            <person name="Lobo M."/>
            <person name="Matos A.P."/>
            <person name="De Pedro M.A."/>
            <person name="Arraiano C.M."/>
        </authorList>
    </citation>
    <scope>FUNCTION</scope>
</reference>
<reference key="9">
    <citation type="journal article" date="2004" name="Appl. Environ. Microbiol.">
        <title>Effect of Escherichia coli morphogene bolA on biofilms.</title>
        <authorList>
            <person name="Vieira H.L."/>
            <person name="Freire P."/>
            <person name="Arraiano C.M."/>
        </authorList>
    </citation>
    <scope>FUNCTION IN BIOFILM DEVELOPMENT</scope>
</reference>
<reference key="10">
    <citation type="journal article" date="2005" name="FEBS Lett.">
        <title>Combining data from genomes, Y2H and 3D structure indicates that BolA is a reductase interacting with a glutaredoxin.</title>
        <authorList>
            <person name="Huynen M.A."/>
            <person name="Spronk C.A."/>
            <person name="Gabaldon T."/>
            <person name="Snel B."/>
        </authorList>
    </citation>
    <scope>FUNCTION PREDICTION</scope>
</reference>
<reference key="11">
    <citation type="journal article" date="2009" name="J. Mol. Biol.">
        <title>BolA inhibits cell elongation and regulates MreB expression levels.</title>
        <authorList>
            <person name="Freire P."/>
            <person name="Moreira R.N."/>
            <person name="Arraiano C.M."/>
        </authorList>
    </citation>
    <scope>FUNCTION</scope>
    <scope>DNA-BINDING</scope>
</reference>
<reference key="12">
    <citation type="journal article" date="2011" name="J. Microbiol. Biotechnol.">
        <title>BolA affects cell growth, and binds to the promoters of penicillin-binding proteins 5 and 6 and regulates their expression.</title>
        <authorList>
            <person name="Guinote I.B."/>
            <person name="Matos R.G."/>
            <person name="Freire P."/>
            <person name="Arraiano C.M."/>
        </authorList>
    </citation>
    <scope>FUNCTION</scope>
    <scope>DNA-BINDING</scope>
</reference>
<reference key="13">
    <citation type="journal article" date="2015" name="MBio">
        <title>BolA is a transcriptional switch that turns off motility and turns on biofilm development.</title>
        <authorList>
            <person name="Dressaire C."/>
            <person name="Moreira R.N."/>
            <person name="Barahona S."/>
            <person name="Alves de Matos A.P."/>
            <person name="Arraiano C.M."/>
        </authorList>
    </citation>
    <scope>FUNCTION</scope>
    <scope>DNA-BINDING</scope>
</reference>
<reference key="14">
    <citation type="submission" date="2006-09" db="PDB data bank">
        <title>Solution structure of the bolA protein from Escherichia coli.</title>
        <authorList>
            <consortium name="RIKEN structural genomics initiative (RSGI)"/>
        </authorList>
    </citation>
    <scope>STRUCTURE BY NMR OF 1-100</scope>
</reference>
<organism>
    <name type="scientific">Escherichia coli (strain K12)</name>
    <dbReference type="NCBI Taxonomy" id="83333"/>
    <lineage>
        <taxon>Bacteria</taxon>
        <taxon>Pseudomonadati</taxon>
        <taxon>Pseudomonadota</taxon>
        <taxon>Gammaproteobacteria</taxon>
        <taxon>Enterobacterales</taxon>
        <taxon>Enterobacteriaceae</taxon>
        <taxon>Escherichia</taxon>
    </lineage>
</organism>
<proteinExistence type="evidence at protein level"/>
<protein>
    <recommendedName>
        <fullName evidence="10">DNA-binding transcriptional regulator BolA</fullName>
    </recommendedName>
</protein>
<dbReference type="EMBL" id="X17642">
    <property type="protein sequence ID" value="CAA35633.1"/>
    <property type="status" value="ALT_INIT"/>
    <property type="molecule type" value="Genomic_DNA"/>
</dbReference>
<dbReference type="EMBL" id="U82664">
    <property type="protein sequence ID" value="AAB40191.1"/>
    <property type="status" value="ALT_INIT"/>
    <property type="molecule type" value="Genomic_DNA"/>
</dbReference>
<dbReference type="EMBL" id="U00096">
    <property type="protein sequence ID" value="AAC73538.2"/>
    <property type="molecule type" value="Genomic_DNA"/>
</dbReference>
<dbReference type="EMBL" id="AP009048">
    <property type="protein sequence ID" value="BAE76215.1"/>
    <property type="molecule type" value="Genomic_DNA"/>
</dbReference>
<dbReference type="EMBL" id="S67816">
    <property type="protein sequence ID" value="AAB28882.2"/>
    <property type="status" value="ALT_INIT"/>
    <property type="molecule type" value="Genomic_DNA"/>
</dbReference>
<dbReference type="RefSeq" id="NP_414969.4">
    <property type="nucleotide sequence ID" value="NC_000913.3"/>
</dbReference>
<dbReference type="RefSeq" id="WP_000973448.1">
    <property type="nucleotide sequence ID" value="NZ_STEB01000007.1"/>
</dbReference>
<dbReference type="PDB" id="2DHM">
    <property type="method" value="NMR"/>
    <property type="chains" value="A=1-100"/>
</dbReference>
<dbReference type="PDBsum" id="2DHM"/>
<dbReference type="SMR" id="P0ABE2"/>
<dbReference type="BioGRID" id="4259840">
    <property type="interactions" value="607"/>
</dbReference>
<dbReference type="BioGRID" id="851382">
    <property type="interactions" value="10"/>
</dbReference>
<dbReference type="ComplexPortal" id="CPX-5898">
    <property type="entry name" value="bolA-grxD iron-sulfur cluster assembly complex"/>
</dbReference>
<dbReference type="DIP" id="DIP-47926N"/>
<dbReference type="FunCoup" id="P0ABE2">
    <property type="interactions" value="600"/>
</dbReference>
<dbReference type="IntAct" id="P0ABE2">
    <property type="interactions" value="13"/>
</dbReference>
<dbReference type="STRING" id="511145.b0435"/>
<dbReference type="jPOST" id="P0ABE2"/>
<dbReference type="PaxDb" id="511145-b0435"/>
<dbReference type="EnsemblBacteria" id="AAC73538">
    <property type="protein sequence ID" value="AAC73538"/>
    <property type="gene ID" value="b0435"/>
</dbReference>
<dbReference type="GeneID" id="93777019"/>
<dbReference type="GeneID" id="947043"/>
<dbReference type="KEGG" id="ecj:JW5060"/>
<dbReference type="KEGG" id="eco:b0435"/>
<dbReference type="KEGG" id="ecoc:C3026_02125"/>
<dbReference type="PATRIC" id="fig|511145.12.peg.452"/>
<dbReference type="EchoBASE" id="EB0123"/>
<dbReference type="eggNOG" id="COG0271">
    <property type="taxonomic scope" value="Bacteria"/>
</dbReference>
<dbReference type="HOGENOM" id="CLU_109462_3_1_6"/>
<dbReference type="InParanoid" id="P0ABE2"/>
<dbReference type="OMA" id="CLGGFGK"/>
<dbReference type="OrthoDB" id="9801469at2"/>
<dbReference type="PhylomeDB" id="P0ABE2"/>
<dbReference type="BioCyc" id="EcoCyc:EG10125-MONOMER"/>
<dbReference type="EvolutionaryTrace" id="P0ABE2"/>
<dbReference type="PRO" id="PR:P0ABE2"/>
<dbReference type="Proteomes" id="UP000000625">
    <property type="component" value="Chromosome"/>
</dbReference>
<dbReference type="GO" id="GO:0005829">
    <property type="term" value="C:cytosol"/>
    <property type="evidence" value="ECO:0000314"/>
    <property type="project" value="EcoCyc"/>
</dbReference>
<dbReference type="GO" id="GO:1990229">
    <property type="term" value="C:iron-sulfur cluster assembly complex"/>
    <property type="evidence" value="ECO:0000353"/>
    <property type="project" value="ComplexPortal"/>
</dbReference>
<dbReference type="GO" id="GO:0003677">
    <property type="term" value="F:DNA binding"/>
    <property type="evidence" value="ECO:0007669"/>
    <property type="project" value="UniProtKB-KW"/>
</dbReference>
<dbReference type="GO" id="GO:0045454">
    <property type="term" value="P:cell redox homeostasis"/>
    <property type="evidence" value="ECO:0000303"/>
    <property type="project" value="ComplexPortal"/>
</dbReference>
<dbReference type="GO" id="GO:0006351">
    <property type="term" value="P:DNA-templated transcription"/>
    <property type="evidence" value="ECO:0000270"/>
    <property type="project" value="EcoCyc"/>
</dbReference>
<dbReference type="GO" id="GO:0006879">
    <property type="term" value="P:intracellular iron ion homeostasis"/>
    <property type="evidence" value="ECO:0000303"/>
    <property type="project" value="ComplexPortal"/>
</dbReference>
<dbReference type="GO" id="GO:0016226">
    <property type="term" value="P:iron-sulfur cluster assembly"/>
    <property type="evidence" value="ECO:0000303"/>
    <property type="project" value="ComplexPortal"/>
</dbReference>
<dbReference type="FunFam" id="3.30.300.90:FF:000001">
    <property type="entry name" value="Transcriptional regulator BolA"/>
    <property type="match status" value="1"/>
</dbReference>
<dbReference type="Gene3D" id="3.30.300.90">
    <property type="entry name" value="BolA-like"/>
    <property type="match status" value="1"/>
</dbReference>
<dbReference type="InterPro" id="IPR002634">
    <property type="entry name" value="BolA"/>
</dbReference>
<dbReference type="InterPro" id="IPR036065">
    <property type="entry name" value="BolA-like_sf"/>
</dbReference>
<dbReference type="InterPro" id="IPR050961">
    <property type="entry name" value="BolA/IbaG_stress_morph_reg"/>
</dbReference>
<dbReference type="NCBIfam" id="NF008638">
    <property type="entry name" value="PRK11628.1"/>
    <property type="match status" value="1"/>
</dbReference>
<dbReference type="PANTHER" id="PTHR46229">
    <property type="entry name" value="BOLA TRANSCRIPTION REGULATOR"/>
    <property type="match status" value="1"/>
</dbReference>
<dbReference type="PANTHER" id="PTHR46229:SF2">
    <property type="entry name" value="BOLA-LIKE PROTEIN 1"/>
    <property type="match status" value="1"/>
</dbReference>
<dbReference type="Pfam" id="PF01722">
    <property type="entry name" value="BolA"/>
    <property type="match status" value="1"/>
</dbReference>
<dbReference type="PIRSF" id="PIRSF003113">
    <property type="entry name" value="BolA"/>
    <property type="match status" value="1"/>
</dbReference>
<dbReference type="SUPFAM" id="SSF82657">
    <property type="entry name" value="BolA-like"/>
    <property type="match status" value="1"/>
</dbReference>
<feature type="chain" id="PRO_0000201212" description="DNA-binding transcriptional regulator BolA">
    <location>
        <begin position="1"/>
        <end position="105"/>
    </location>
</feature>
<feature type="helix" evidence="12">
    <location>
        <begin position="3"/>
        <end position="14"/>
    </location>
</feature>
<feature type="strand" evidence="12">
    <location>
        <begin position="21"/>
        <end position="24"/>
    </location>
</feature>
<feature type="strand" evidence="12">
    <location>
        <begin position="39"/>
        <end position="44"/>
    </location>
</feature>
<feature type="helix" evidence="12">
    <location>
        <begin position="46"/>
        <end position="48"/>
    </location>
</feature>
<feature type="helix" evidence="12">
    <location>
        <begin position="55"/>
        <end position="63"/>
    </location>
</feature>
<feature type="helix" evidence="12">
    <location>
        <begin position="65"/>
        <end position="69"/>
    </location>
</feature>
<feature type="strand" evidence="12">
    <location>
        <begin position="76"/>
        <end position="80"/>
    </location>
</feature>
<feature type="helix" evidence="12">
    <location>
        <begin position="82"/>
        <end position="86"/>
    </location>
</feature>
<gene>
    <name evidence="9" type="primary">bolA</name>
    <name type="ordered locus">b0435</name>
    <name type="ordered locus">JW5060</name>
</gene>